<accession>A2C5G1</accession>
<keyword id="KW-0067">ATP-binding</keyword>
<keyword id="KW-0436">Ligase</keyword>
<keyword id="KW-0479">Metal-binding</keyword>
<keyword id="KW-0547">Nucleotide-binding</keyword>
<keyword id="KW-0671">Queuosine biosynthesis</keyword>
<keyword id="KW-0862">Zinc</keyword>
<organism>
    <name type="scientific">Prochlorococcus marinus (strain NATL1A)</name>
    <dbReference type="NCBI Taxonomy" id="167555"/>
    <lineage>
        <taxon>Bacteria</taxon>
        <taxon>Bacillati</taxon>
        <taxon>Cyanobacteriota</taxon>
        <taxon>Cyanophyceae</taxon>
        <taxon>Synechococcales</taxon>
        <taxon>Prochlorococcaceae</taxon>
        <taxon>Prochlorococcus</taxon>
    </lineage>
</organism>
<protein>
    <recommendedName>
        <fullName evidence="1">7-cyano-7-deazaguanine synthase</fullName>
        <ecNumber evidence="1">6.3.4.20</ecNumber>
    </recommendedName>
    <alternativeName>
        <fullName evidence="1">7-cyano-7-carbaguanine synthase</fullName>
    </alternativeName>
    <alternativeName>
        <fullName evidence="1">PreQ(0) synthase</fullName>
    </alternativeName>
    <alternativeName>
        <fullName evidence="1">Queuosine biosynthesis protein QueC</fullName>
    </alternativeName>
</protein>
<sequence length="225" mass="24665">MIEQTTIALLSGGIDSATAACIAMEAGQKVIGLSFDYGQRHLKELQAAADLAKNLNLEDHITIKIDLSSWGGSSLTDTSQAIPTKGIQKNTIPNTYVPGRNTIFVAIGLSLAEARGANRIALGINAMDYSGYPDCRPDYLKAYQELANLSSRVGREGKGIKLWAPLLDWEKTKIFEEALRLKIPIEKTWSCYQGESKPCGRCDSCRIRDKALKEIGREDLCSQNI</sequence>
<feature type="chain" id="PRO_1000069787" description="7-cyano-7-deazaguanine synthase">
    <location>
        <begin position="1"/>
        <end position="225"/>
    </location>
</feature>
<feature type="binding site" evidence="1">
    <location>
        <begin position="10"/>
        <end position="20"/>
    </location>
    <ligand>
        <name>ATP</name>
        <dbReference type="ChEBI" id="CHEBI:30616"/>
    </ligand>
</feature>
<feature type="binding site" evidence="1">
    <location>
        <position position="191"/>
    </location>
    <ligand>
        <name>Zn(2+)</name>
        <dbReference type="ChEBI" id="CHEBI:29105"/>
    </ligand>
</feature>
<feature type="binding site" evidence="1">
    <location>
        <position position="199"/>
    </location>
    <ligand>
        <name>Zn(2+)</name>
        <dbReference type="ChEBI" id="CHEBI:29105"/>
    </ligand>
</feature>
<feature type="binding site" evidence="1">
    <location>
        <position position="202"/>
    </location>
    <ligand>
        <name>Zn(2+)</name>
        <dbReference type="ChEBI" id="CHEBI:29105"/>
    </ligand>
</feature>
<feature type="binding site" evidence="1">
    <location>
        <position position="205"/>
    </location>
    <ligand>
        <name>Zn(2+)</name>
        <dbReference type="ChEBI" id="CHEBI:29105"/>
    </ligand>
</feature>
<gene>
    <name evidence="1" type="primary">queC</name>
    <name type="ordered locus">NATL1_21651</name>
</gene>
<comment type="function">
    <text evidence="1">Catalyzes the ATP-dependent conversion of 7-carboxy-7-deazaguanine (CDG) to 7-cyano-7-deazaguanine (preQ(0)).</text>
</comment>
<comment type="catalytic activity">
    <reaction evidence="1">
        <text>7-carboxy-7-deazaguanine + NH4(+) + ATP = 7-cyano-7-deazaguanine + ADP + phosphate + H2O + H(+)</text>
        <dbReference type="Rhea" id="RHEA:27982"/>
        <dbReference type="ChEBI" id="CHEBI:15377"/>
        <dbReference type="ChEBI" id="CHEBI:15378"/>
        <dbReference type="ChEBI" id="CHEBI:28938"/>
        <dbReference type="ChEBI" id="CHEBI:30616"/>
        <dbReference type="ChEBI" id="CHEBI:43474"/>
        <dbReference type="ChEBI" id="CHEBI:45075"/>
        <dbReference type="ChEBI" id="CHEBI:61036"/>
        <dbReference type="ChEBI" id="CHEBI:456216"/>
        <dbReference type="EC" id="6.3.4.20"/>
    </reaction>
</comment>
<comment type="cofactor">
    <cofactor evidence="1">
        <name>Zn(2+)</name>
        <dbReference type="ChEBI" id="CHEBI:29105"/>
    </cofactor>
    <text evidence="1">Binds 1 zinc ion per subunit.</text>
</comment>
<comment type="pathway">
    <text evidence="1">Purine metabolism; 7-cyano-7-deazaguanine biosynthesis.</text>
</comment>
<comment type="similarity">
    <text evidence="1">Belongs to the QueC family.</text>
</comment>
<evidence type="ECO:0000255" key="1">
    <source>
        <dbReference type="HAMAP-Rule" id="MF_01633"/>
    </source>
</evidence>
<dbReference type="EC" id="6.3.4.20" evidence="1"/>
<dbReference type="EMBL" id="CP000553">
    <property type="protein sequence ID" value="ABM76721.1"/>
    <property type="molecule type" value="Genomic_DNA"/>
</dbReference>
<dbReference type="RefSeq" id="WP_011824657.1">
    <property type="nucleotide sequence ID" value="NC_008819.1"/>
</dbReference>
<dbReference type="SMR" id="A2C5G1"/>
<dbReference type="KEGG" id="pme:NATL1_21651"/>
<dbReference type="eggNOG" id="COG0603">
    <property type="taxonomic scope" value="Bacteria"/>
</dbReference>
<dbReference type="HOGENOM" id="CLU_081854_1_0_3"/>
<dbReference type="UniPathway" id="UPA00391"/>
<dbReference type="Proteomes" id="UP000002592">
    <property type="component" value="Chromosome"/>
</dbReference>
<dbReference type="GO" id="GO:0005524">
    <property type="term" value="F:ATP binding"/>
    <property type="evidence" value="ECO:0007669"/>
    <property type="project" value="UniProtKB-UniRule"/>
</dbReference>
<dbReference type="GO" id="GO:0016879">
    <property type="term" value="F:ligase activity, forming carbon-nitrogen bonds"/>
    <property type="evidence" value="ECO:0007669"/>
    <property type="project" value="UniProtKB-UniRule"/>
</dbReference>
<dbReference type="GO" id="GO:0008270">
    <property type="term" value="F:zinc ion binding"/>
    <property type="evidence" value="ECO:0007669"/>
    <property type="project" value="UniProtKB-UniRule"/>
</dbReference>
<dbReference type="GO" id="GO:0008616">
    <property type="term" value="P:queuosine biosynthetic process"/>
    <property type="evidence" value="ECO:0007669"/>
    <property type="project" value="UniProtKB-UniRule"/>
</dbReference>
<dbReference type="CDD" id="cd01995">
    <property type="entry name" value="QueC-like"/>
    <property type="match status" value="1"/>
</dbReference>
<dbReference type="Gene3D" id="3.40.50.620">
    <property type="entry name" value="HUPs"/>
    <property type="match status" value="1"/>
</dbReference>
<dbReference type="HAMAP" id="MF_01633">
    <property type="entry name" value="QueC"/>
    <property type="match status" value="1"/>
</dbReference>
<dbReference type="InterPro" id="IPR018317">
    <property type="entry name" value="QueC"/>
</dbReference>
<dbReference type="InterPro" id="IPR014729">
    <property type="entry name" value="Rossmann-like_a/b/a_fold"/>
</dbReference>
<dbReference type="NCBIfam" id="TIGR00364">
    <property type="entry name" value="7-cyano-7-deazaguanine synthase QueC"/>
    <property type="match status" value="1"/>
</dbReference>
<dbReference type="PANTHER" id="PTHR42914">
    <property type="entry name" value="7-CYANO-7-DEAZAGUANINE SYNTHASE"/>
    <property type="match status" value="1"/>
</dbReference>
<dbReference type="PANTHER" id="PTHR42914:SF1">
    <property type="entry name" value="7-CYANO-7-DEAZAGUANINE SYNTHASE"/>
    <property type="match status" value="1"/>
</dbReference>
<dbReference type="Pfam" id="PF06508">
    <property type="entry name" value="QueC"/>
    <property type="match status" value="1"/>
</dbReference>
<dbReference type="PIRSF" id="PIRSF006293">
    <property type="entry name" value="ExsB"/>
    <property type="match status" value="1"/>
</dbReference>
<dbReference type="SUPFAM" id="SSF52402">
    <property type="entry name" value="Adenine nucleotide alpha hydrolases-like"/>
    <property type="match status" value="1"/>
</dbReference>
<proteinExistence type="inferred from homology"/>
<reference key="1">
    <citation type="journal article" date="2007" name="PLoS Genet.">
        <title>Patterns and implications of gene gain and loss in the evolution of Prochlorococcus.</title>
        <authorList>
            <person name="Kettler G.C."/>
            <person name="Martiny A.C."/>
            <person name="Huang K."/>
            <person name="Zucker J."/>
            <person name="Coleman M.L."/>
            <person name="Rodrigue S."/>
            <person name="Chen F."/>
            <person name="Lapidus A."/>
            <person name="Ferriera S."/>
            <person name="Johnson J."/>
            <person name="Steglich C."/>
            <person name="Church G.M."/>
            <person name="Richardson P."/>
            <person name="Chisholm S.W."/>
        </authorList>
    </citation>
    <scope>NUCLEOTIDE SEQUENCE [LARGE SCALE GENOMIC DNA]</scope>
    <source>
        <strain>NATL1A</strain>
    </source>
</reference>
<name>QUEC_PROM1</name>